<reference key="1">
    <citation type="submission" date="2005-12" db="EMBL/GenBank/DDBJ databases">
        <title>XBTBD6, a XCullin-3 interacting Protein, is expressed during neurogenesis in Xenopus laevis.</title>
        <authorList>
            <person name="Bury F.J."/>
            <person name="Moers V."/>
            <person name="Bellefroid E.J."/>
        </authorList>
    </citation>
    <scope>NUCLEOTIDE SEQUENCE [MRNA]</scope>
</reference>
<reference key="2">
    <citation type="submission" date="2008-11" db="EMBL/GenBank/DDBJ databases">
        <authorList>
            <consortium name="NIH - Xenopus Gene Collection (XGC) project"/>
        </authorList>
    </citation>
    <scope>NUCLEOTIDE SEQUENCE [LARGE SCALE MRNA]</scope>
    <source>
        <tissue>Gastrula</tissue>
    </source>
</reference>
<reference key="3">
    <citation type="journal article" date="2008" name="Dev. Dyn.">
        <title>Xenopus BTBD6 and its Drosophila homologue lute are required for neuronal development.</title>
        <authorList>
            <person name="Bury F.J."/>
            <person name="Moers V."/>
            <person name="Yan J."/>
            <person name="Souopgui J."/>
            <person name="Quan X.J."/>
            <person name="De Geest N."/>
            <person name="Kricha S."/>
            <person name="Hassan B.A."/>
            <person name="Bellefroid E.J."/>
        </authorList>
    </citation>
    <scope>FUNCTION</scope>
    <scope>DISRUPTION PHENOTYPE</scope>
    <scope>SUBUNIT</scope>
    <scope>DEVELOPMENTAL STAGE</scope>
    <scope>SUBCELLULAR LOCATION</scope>
    <scope>INTERACTION WITH CUL3</scope>
</reference>
<feature type="chain" id="PRO_0000380250" description="BTB/POZ domain-containing protein 6">
    <location>
        <begin position="1"/>
        <end position="529"/>
    </location>
</feature>
<feature type="domain" description="BTB" evidence="2">
    <location>
        <begin position="127"/>
        <end position="197"/>
    </location>
</feature>
<accession>Q2LE78</accession>
<organism>
    <name type="scientific">Xenopus laevis</name>
    <name type="common">African clawed frog</name>
    <dbReference type="NCBI Taxonomy" id="8355"/>
    <lineage>
        <taxon>Eukaryota</taxon>
        <taxon>Metazoa</taxon>
        <taxon>Chordata</taxon>
        <taxon>Craniata</taxon>
        <taxon>Vertebrata</taxon>
        <taxon>Euteleostomi</taxon>
        <taxon>Amphibia</taxon>
        <taxon>Batrachia</taxon>
        <taxon>Anura</taxon>
        <taxon>Pipoidea</taxon>
        <taxon>Pipidae</taxon>
        <taxon>Xenopodinae</taxon>
        <taxon>Xenopus</taxon>
        <taxon>Xenopus</taxon>
    </lineage>
</organism>
<evidence type="ECO:0000250" key="1">
    <source>
        <dbReference type="UniProtKB" id="A9JRD8"/>
    </source>
</evidence>
<evidence type="ECO:0000255" key="2">
    <source>
        <dbReference type="PROSITE-ProRule" id="PRU00037"/>
    </source>
</evidence>
<evidence type="ECO:0000269" key="3">
    <source>
    </source>
</evidence>
<protein>
    <recommendedName>
        <fullName>BTB/POZ domain-containing protein 6</fullName>
    </recommendedName>
</protein>
<dbReference type="EMBL" id="DQ327672">
    <property type="protein sequence ID" value="ABC59313.1"/>
    <property type="molecule type" value="mRNA"/>
</dbReference>
<dbReference type="EMBL" id="BC169436">
    <property type="protein sequence ID" value="AAI69436.1"/>
    <property type="molecule type" value="mRNA"/>
</dbReference>
<dbReference type="EMBL" id="BC169440">
    <property type="protein sequence ID" value="AAI69440.1"/>
    <property type="molecule type" value="mRNA"/>
</dbReference>
<dbReference type="RefSeq" id="NP_001082188.1">
    <property type="nucleotide sequence ID" value="NM_001088719.1"/>
</dbReference>
<dbReference type="SMR" id="Q2LE78"/>
<dbReference type="GeneID" id="398279"/>
<dbReference type="KEGG" id="xla:398279"/>
<dbReference type="AGR" id="Xenbase:XB-GENE-6251792"/>
<dbReference type="CTD" id="398279"/>
<dbReference type="Xenbase" id="XB-GENE-6251792">
    <property type="gene designation" value="btbd6.L"/>
</dbReference>
<dbReference type="OMA" id="QACYEIV"/>
<dbReference type="OrthoDB" id="636773at2759"/>
<dbReference type="Proteomes" id="UP000186698">
    <property type="component" value="Chromosome 8L"/>
</dbReference>
<dbReference type="Bgee" id="398279">
    <property type="expression patterns" value="Expressed in camera-type eye and 18 other cell types or tissues"/>
</dbReference>
<dbReference type="GO" id="GO:0005829">
    <property type="term" value="C:cytosol"/>
    <property type="evidence" value="ECO:0000318"/>
    <property type="project" value="GO_Central"/>
</dbReference>
<dbReference type="GO" id="GO:0022008">
    <property type="term" value="P:neurogenesis"/>
    <property type="evidence" value="ECO:0000318"/>
    <property type="project" value="GO_Central"/>
</dbReference>
<dbReference type="CDD" id="cd18525">
    <property type="entry name" value="BACK_BTBD6"/>
    <property type="match status" value="1"/>
</dbReference>
<dbReference type="CDD" id="cd18349">
    <property type="entry name" value="BTB_POZ_BTBD6"/>
    <property type="match status" value="1"/>
</dbReference>
<dbReference type="FunFam" id="1.25.40.420:FF:000003">
    <property type="entry name" value="BTB/POZ domain-containing protein 3"/>
    <property type="match status" value="1"/>
</dbReference>
<dbReference type="FunFam" id="2.60.120.820:FF:000001">
    <property type="entry name" value="BTB/POZ domain-containing protein 3"/>
    <property type="match status" value="1"/>
</dbReference>
<dbReference type="FunFam" id="3.30.710.10:FF:000015">
    <property type="entry name" value="BTB/POZ domain-containing protein 3"/>
    <property type="match status" value="1"/>
</dbReference>
<dbReference type="Gene3D" id="1.25.40.420">
    <property type="match status" value="1"/>
</dbReference>
<dbReference type="Gene3D" id="2.60.120.820">
    <property type="entry name" value="PHR domain"/>
    <property type="match status" value="1"/>
</dbReference>
<dbReference type="Gene3D" id="3.30.710.10">
    <property type="entry name" value="Potassium Channel Kv1.1, Chain A"/>
    <property type="match status" value="1"/>
</dbReference>
<dbReference type="InterPro" id="IPR011705">
    <property type="entry name" value="BACK"/>
</dbReference>
<dbReference type="InterPro" id="IPR000210">
    <property type="entry name" value="BTB/POZ_dom"/>
</dbReference>
<dbReference type="InterPro" id="IPR049738">
    <property type="entry name" value="BTB_POZ_BTBD6"/>
</dbReference>
<dbReference type="InterPro" id="IPR012983">
    <property type="entry name" value="PHR"/>
</dbReference>
<dbReference type="InterPro" id="IPR038648">
    <property type="entry name" value="PHR_sf"/>
</dbReference>
<dbReference type="InterPro" id="IPR011333">
    <property type="entry name" value="SKP1/BTB/POZ_sf"/>
</dbReference>
<dbReference type="PANTHER" id="PTHR45774">
    <property type="entry name" value="BTB/POZ DOMAIN-CONTAINING"/>
    <property type="match status" value="1"/>
</dbReference>
<dbReference type="PANTHER" id="PTHR45774:SF5">
    <property type="entry name" value="BTB_POZ DOMAIN-CONTAINING PROTEIN 6"/>
    <property type="match status" value="1"/>
</dbReference>
<dbReference type="Pfam" id="PF07707">
    <property type="entry name" value="BACK"/>
    <property type="match status" value="1"/>
</dbReference>
<dbReference type="Pfam" id="PF00651">
    <property type="entry name" value="BTB"/>
    <property type="match status" value="1"/>
</dbReference>
<dbReference type="Pfam" id="PF08005">
    <property type="entry name" value="PHR"/>
    <property type="match status" value="1"/>
</dbReference>
<dbReference type="SMART" id="SM00875">
    <property type="entry name" value="BACK"/>
    <property type="match status" value="1"/>
</dbReference>
<dbReference type="SMART" id="SM00225">
    <property type="entry name" value="BTB"/>
    <property type="match status" value="1"/>
</dbReference>
<dbReference type="SUPFAM" id="SSF54695">
    <property type="entry name" value="POZ domain"/>
    <property type="match status" value="1"/>
</dbReference>
<dbReference type="PROSITE" id="PS50097">
    <property type="entry name" value="BTB"/>
    <property type="match status" value="1"/>
</dbReference>
<comment type="function">
    <text evidence="1 3">Adapter protein for the cul3 E3 ubiquitin-protein ligase complex (By similarity). Involved in late neuronal development and muscle formation (PubMed:18855900).</text>
</comment>
<comment type="subunit">
    <text evidence="3">Homodimer and heterodimer. Interacts with cul3 via the BTB domain.</text>
</comment>
<comment type="subcellular location">
    <subcellularLocation>
        <location evidence="3">Cytoplasm</location>
    </subcellularLocation>
    <text evidence="3">Found in punctated bodies in the cytoplasm.</text>
</comment>
<comment type="developmental stage">
    <text evidence="3">Highly expressed in the developing nervous system.</text>
</comment>
<comment type="disruption phenotype">
    <text evidence="3">Embryos show strong defects in late neuronal markers and strongly reduced and disorganized axons while early neural development is unaffected. Muscle development is also affected.</text>
</comment>
<proteinExistence type="evidence at protein level"/>
<keyword id="KW-0963">Cytoplasm</keyword>
<keyword id="KW-1185">Reference proteome</keyword>
<gene>
    <name type="primary">btbd6</name>
</gene>
<name>BTBD6_XENLA</name>
<sequence>MPLDPGCLNGRVMKCLTFFLLLPETLKKSRKSARAQGKVQACYEIVPLALKKKMAAELYPASANTNIANSNATANAKKNALQLQHTAPPPPQLHNLNNNNIESSNWQSFHPTLRERNALMFNNELMADVHFIVGPAGASKKVPAHKYILAVGSSVFYAMFYGDLAEVKSEIHIPDVEPAAFLILLKYLYSDEIDLEADTVLATLYAAKKYIVPALAKACVNFLETSLEAKNACVLLSQSRLFEEPDLTLRCWEVIDAQAELALKSEGFCEIDLPTLEIIVTRETLNTKEDVVFEAVLNWAEAECKRQGLPITPVNKRNVLGKALYLVRIPTMTLEEFANGAAQSDILTLEETRSIFLWYTAANKPQLEFPLIKRKGLAPQRCHRFQSSAYRSNQWRYRGRCDSIQFAVDKRIFIAGLGLYGSSCGKAEYSVKIELKRQGVVLAQNLTKFVSDGCSNTFSVWFEHPVQVEQDTFYTVSAILDGNELSYFGQEGMTEVQCGKVTFQFQCSSDSTNGTGVQGGQIPELIFYA</sequence>